<reference key="1">
    <citation type="journal article" date="2004" name="Proc. Natl. Acad. Sci. U.S.A.">
        <title>The complete genomic sequence of Nocardia farcinica IFM 10152.</title>
        <authorList>
            <person name="Ishikawa J."/>
            <person name="Yamashita A."/>
            <person name="Mikami Y."/>
            <person name="Hoshino Y."/>
            <person name="Kurita H."/>
            <person name="Hotta K."/>
            <person name="Shiba T."/>
            <person name="Hattori M."/>
        </authorList>
    </citation>
    <scope>NUCLEOTIDE SEQUENCE [LARGE SCALE GENOMIC DNA]</scope>
    <source>
        <strain>IFM 10152</strain>
    </source>
</reference>
<dbReference type="EMBL" id="AP006618">
    <property type="protein sequence ID" value="BAD55911.1"/>
    <property type="molecule type" value="Genomic_DNA"/>
</dbReference>
<dbReference type="SMR" id="Q5Z0Y0"/>
<dbReference type="STRING" id="247156.NFA_10660"/>
<dbReference type="KEGG" id="nfa:NFA_10660"/>
<dbReference type="eggNOG" id="COG0355">
    <property type="taxonomic scope" value="Bacteria"/>
</dbReference>
<dbReference type="HOGENOM" id="CLU_084338_1_3_11"/>
<dbReference type="Proteomes" id="UP000006820">
    <property type="component" value="Chromosome"/>
</dbReference>
<dbReference type="GO" id="GO:0005886">
    <property type="term" value="C:plasma membrane"/>
    <property type="evidence" value="ECO:0007669"/>
    <property type="project" value="UniProtKB-SubCell"/>
</dbReference>
<dbReference type="GO" id="GO:0045259">
    <property type="term" value="C:proton-transporting ATP synthase complex"/>
    <property type="evidence" value="ECO:0007669"/>
    <property type="project" value="UniProtKB-KW"/>
</dbReference>
<dbReference type="GO" id="GO:0005524">
    <property type="term" value="F:ATP binding"/>
    <property type="evidence" value="ECO:0007669"/>
    <property type="project" value="UniProtKB-UniRule"/>
</dbReference>
<dbReference type="GO" id="GO:0046933">
    <property type="term" value="F:proton-transporting ATP synthase activity, rotational mechanism"/>
    <property type="evidence" value="ECO:0007669"/>
    <property type="project" value="UniProtKB-UniRule"/>
</dbReference>
<dbReference type="CDD" id="cd12152">
    <property type="entry name" value="F1-ATPase_delta"/>
    <property type="match status" value="1"/>
</dbReference>
<dbReference type="Gene3D" id="2.60.15.10">
    <property type="entry name" value="F0F1 ATP synthase delta/epsilon subunit, N-terminal"/>
    <property type="match status" value="1"/>
</dbReference>
<dbReference type="HAMAP" id="MF_00530">
    <property type="entry name" value="ATP_synth_epsil_bac"/>
    <property type="match status" value="1"/>
</dbReference>
<dbReference type="InterPro" id="IPR001469">
    <property type="entry name" value="ATP_synth_F1_dsu/esu"/>
</dbReference>
<dbReference type="InterPro" id="IPR020546">
    <property type="entry name" value="ATP_synth_F1_dsu/esu_N"/>
</dbReference>
<dbReference type="InterPro" id="IPR036771">
    <property type="entry name" value="ATPsynth_dsu/esu_N"/>
</dbReference>
<dbReference type="NCBIfam" id="TIGR01216">
    <property type="entry name" value="ATP_synt_epsi"/>
    <property type="match status" value="1"/>
</dbReference>
<dbReference type="NCBIfam" id="NF001852">
    <property type="entry name" value="PRK00571.2-5"/>
    <property type="match status" value="1"/>
</dbReference>
<dbReference type="NCBIfam" id="NF009977">
    <property type="entry name" value="PRK13442.1"/>
    <property type="match status" value="1"/>
</dbReference>
<dbReference type="PANTHER" id="PTHR13822">
    <property type="entry name" value="ATP SYNTHASE DELTA/EPSILON CHAIN"/>
    <property type="match status" value="1"/>
</dbReference>
<dbReference type="PANTHER" id="PTHR13822:SF10">
    <property type="entry name" value="ATP SYNTHASE EPSILON CHAIN, CHLOROPLASTIC"/>
    <property type="match status" value="1"/>
</dbReference>
<dbReference type="Pfam" id="PF02823">
    <property type="entry name" value="ATP-synt_DE_N"/>
    <property type="match status" value="1"/>
</dbReference>
<dbReference type="SUPFAM" id="SSF51344">
    <property type="entry name" value="Epsilon subunit of F1F0-ATP synthase N-terminal domain"/>
    <property type="match status" value="1"/>
</dbReference>
<organism>
    <name type="scientific">Nocardia farcinica (strain IFM 10152)</name>
    <dbReference type="NCBI Taxonomy" id="247156"/>
    <lineage>
        <taxon>Bacteria</taxon>
        <taxon>Bacillati</taxon>
        <taxon>Actinomycetota</taxon>
        <taxon>Actinomycetes</taxon>
        <taxon>Mycobacteriales</taxon>
        <taxon>Nocardiaceae</taxon>
        <taxon>Nocardia</taxon>
    </lineage>
</organism>
<accession>Q5Z0Y0</accession>
<gene>
    <name evidence="1" type="primary">atpC</name>
    <name type="ordered locus">NFA_10660</name>
</gene>
<proteinExistence type="inferred from homology"/>
<name>ATPE_NOCFA</name>
<keyword id="KW-0066">ATP synthesis</keyword>
<keyword id="KW-1003">Cell membrane</keyword>
<keyword id="KW-0139">CF(1)</keyword>
<keyword id="KW-0375">Hydrogen ion transport</keyword>
<keyword id="KW-0406">Ion transport</keyword>
<keyword id="KW-0472">Membrane</keyword>
<keyword id="KW-1185">Reference proteome</keyword>
<keyword id="KW-0813">Transport</keyword>
<comment type="function">
    <text evidence="1">Produces ATP from ADP in the presence of a proton gradient across the membrane.</text>
</comment>
<comment type="subunit">
    <text>F-type ATPases have 2 components, CF(1) - the catalytic core - and CF(0) - the membrane proton channel. CF(1) has five subunits: alpha(3), beta(3), gamma(1), delta(1), epsilon(1). CF(0) has three main subunits: a, b and c.</text>
</comment>
<comment type="subcellular location">
    <subcellularLocation>
        <location evidence="1">Cell membrane</location>
        <topology evidence="1">Peripheral membrane protein</topology>
    </subcellularLocation>
</comment>
<comment type="similarity">
    <text evidence="1">Belongs to the ATPase epsilon chain family.</text>
</comment>
<evidence type="ECO:0000255" key="1">
    <source>
        <dbReference type="HAMAP-Rule" id="MF_00530"/>
    </source>
</evidence>
<protein>
    <recommendedName>
        <fullName evidence="1">ATP synthase epsilon chain</fullName>
    </recommendedName>
    <alternativeName>
        <fullName evidence="1">ATP synthase F1 sector epsilon subunit</fullName>
    </alternativeName>
    <alternativeName>
        <fullName evidence="1">F-ATPase epsilon subunit</fullName>
    </alternativeName>
</protein>
<sequence>MAAESTKDMSVDLVAVERRLWSGQATFVSAQTTEGQIGIMPGHEPLLGQLVEGGIVNIVPVEGERIVAAVHGGFFSVTAGTVRILAESAEFAGEVDVDEARKVLADSAASDEELRVAQGRVRAVEQVASA</sequence>
<feature type="chain" id="PRO_0000188170" description="ATP synthase epsilon chain">
    <location>
        <begin position="1"/>
        <end position="130"/>
    </location>
</feature>